<gene>
    <name type="primary">ssb</name>
    <name type="ordered locus">CTC_00108</name>
</gene>
<protein>
    <recommendedName>
        <fullName evidence="1">Single-stranded DNA-binding protein</fullName>
        <shortName evidence="1">SSB</shortName>
    </recommendedName>
</protein>
<keyword id="KW-0238">DNA-binding</keyword>
<keyword id="KW-1185">Reference proteome</keyword>
<sequence length="145" mass="16181">MNRVVLIGRLTKDPELKFTPGTGTAVTTFVLAVDRRFSKDGKNEADFIPVVVWGKQAESTANYMSKGKLIGISGRIQTRSYEAKDGTRRYVTEVVADEVKFLEWGNKQSSGSQGFNNFESDPLSYNNEDNYNDDITPVDEGEVPF</sequence>
<accession>Q899R2</accession>
<name>SSB_CLOTE</name>
<comment type="subunit">
    <text evidence="1">Homotetramer.</text>
</comment>
<organism>
    <name type="scientific">Clostridium tetani (strain Massachusetts / E88)</name>
    <dbReference type="NCBI Taxonomy" id="212717"/>
    <lineage>
        <taxon>Bacteria</taxon>
        <taxon>Bacillati</taxon>
        <taxon>Bacillota</taxon>
        <taxon>Clostridia</taxon>
        <taxon>Eubacteriales</taxon>
        <taxon>Clostridiaceae</taxon>
        <taxon>Clostridium</taxon>
    </lineage>
</organism>
<evidence type="ECO:0000255" key="1">
    <source>
        <dbReference type="HAMAP-Rule" id="MF_00984"/>
    </source>
</evidence>
<evidence type="ECO:0000256" key="2">
    <source>
        <dbReference type="SAM" id="MobiDB-lite"/>
    </source>
</evidence>
<proteinExistence type="inferred from homology"/>
<reference key="1">
    <citation type="journal article" date="2003" name="Proc. Natl. Acad. Sci. U.S.A.">
        <title>The genome sequence of Clostridium tetani, the causative agent of tetanus disease.</title>
        <authorList>
            <person name="Brueggemann H."/>
            <person name="Baeumer S."/>
            <person name="Fricke W.F."/>
            <person name="Wiezer A."/>
            <person name="Liesegang H."/>
            <person name="Decker I."/>
            <person name="Herzberg C."/>
            <person name="Martinez-Arias R."/>
            <person name="Merkl R."/>
            <person name="Henne A."/>
            <person name="Gottschalk G."/>
        </authorList>
    </citation>
    <scope>NUCLEOTIDE SEQUENCE [LARGE SCALE GENOMIC DNA]</scope>
    <source>
        <strain>Massachusetts / E88</strain>
    </source>
</reference>
<feature type="chain" id="PRO_0000096032" description="Single-stranded DNA-binding protein">
    <location>
        <begin position="1"/>
        <end position="145"/>
    </location>
</feature>
<feature type="domain" description="SSB" evidence="1">
    <location>
        <begin position="1"/>
        <end position="103"/>
    </location>
</feature>
<feature type="region of interest" description="Disordered" evidence="2">
    <location>
        <begin position="112"/>
        <end position="145"/>
    </location>
</feature>
<feature type="compositionally biased region" description="Polar residues" evidence="2">
    <location>
        <begin position="112"/>
        <end position="129"/>
    </location>
</feature>
<feature type="compositionally biased region" description="Acidic residues" evidence="2">
    <location>
        <begin position="130"/>
        <end position="145"/>
    </location>
</feature>
<dbReference type="EMBL" id="AE015927">
    <property type="protein sequence ID" value="AAO34760.1"/>
    <property type="molecule type" value="Genomic_DNA"/>
</dbReference>
<dbReference type="RefSeq" id="WP_011098432.1">
    <property type="nucleotide sequence ID" value="NC_004557.1"/>
</dbReference>
<dbReference type="SMR" id="Q899R2"/>
<dbReference type="STRING" id="212717.CTC_00108"/>
<dbReference type="GeneID" id="24253784"/>
<dbReference type="KEGG" id="ctc:CTC_00108"/>
<dbReference type="HOGENOM" id="CLU_078758_6_2_9"/>
<dbReference type="OrthoDB" id="9809878at2"/>
<dbReference type="Proteomes" id="UP000001412">
    <property type="component" value="Chromosome"/>
</dbReference>
<dbReference type="GO" id="GO:0009295">
    <property type="term" value="C:nucleoid"/>
    <property type="evidence" value="ECO:0007669"/>
    <property type="project" value="TreeGrafter"/>
</dbReference>
<dbReference type="GO" id="GO:0003697">
    <property type="term" value="F:single-stranded DNA binding"/>
    <property type="evidence" value="ECO:0007669"/>
    <property type="project" value="UniProtKB-UniRule"/>
</dbReference>
<dbReference type="GO" id="GO:0006260">
    <property type="term" value="P:DNA replication"/>
    <property type="evidence" value="ECO:0007669"/>
    <property type="project" value="InterPro"/>
</dbReference>
<dbReference type="CDD" id="cd04496">
    <property type="entry name" value="SSB_OBF"/>
    <property type="match status" value="1"/>
</dbReference>
<dbReference type="Gene3D" id="2.40.50.140">
    <property type="entry name" value="Nucleic acid-binding proteins"/>
    <property type="match status" value="1"/>
</dbReference>
<dbReference type="HAMAP" id="MF_00984">
    <property type="entry name" value="SSB"/>
    <property type="match status" value="1"/>
</dbReference>
<dbReference type="InterPro" id="IPR012340">
    <property type="entry name" value="NA-bd_OB-fold"/>
</dbReference>
<dbReference type="InterPro" id="IPR000424">
    <property type="entry name" value="Primosome_PriB/ssb"/>
</dbReference>
<dbReference type="InterPro" id="IPR011344">
    <property type="entry name" value="ssDNA-bd"/>
</dbReference>
<dbReference type="NCBIfam" id="TIGR00621">
    <property type="entry name" value="ssb"/>
    <property type="match status" value="1"/>
</dbReference>
<dbReference type="PANTHER" id="PTHR10302">
    <property type="entry name" value="SINGLE-STRANDED DNA-BINDING PROTEIN"/>
    <property type="match status" value="1"/>
</dbReference>
<dbReference type="PANTHER" id="PTHR10302:SF27">
    <property type="entry name" value="SINGLE-STRANDED DNA-BINDING PROTEIN"/>
    <property type="match status" value="1"/>
</dbReference>
<dbReference type="Pfam" id="PF00436">
    <property type="entry name" value="SSB"/>
    <property type="match status" value="1"/>
</dbReference>
<dbReference type="PIRSF" id="PIRSF002070">
    <property type="entry name" value="SSB"/>
    <property type="match status" value="1"/>
</dbReference>
<dbReference type="SUPFAM" id="SSF50249">
    <property type="entry name" value="Nucleic acid-binding proteins"/>
    <property type="match status" value="1"/>
</dbReference>
<dbReference type="PROSITE" id="PS50935">
    <property type="entry name" value="SSB"/>
    <property type="match status" value="1"/>
</dbReference>